<feature type="chain" id="PRO_0000312663" description="Probable endonuclease C19F8.04c">
    <location>
        <begin position="1"/>
        <end position="230"/>
    </location>
</feature>
<feature type="transmembrane region" description="Helical" evidence="2">
    <location>
        <begin position="10"/>
        <end position="27"/>
    </location>
</feature>
<feature type="domain" description="TNase-like" evidence="3">
    <location>
        <begin position="55"/>
        <end position="216"/>
    </location>
</feature>
<feature type="active site" evidence="1 3">
    <location>
        <position position="104"/>
    </location>
</feature>
<feature type="active site" evidence="1 3">
    <location>
        <position position="112"/>
    </location>
</feature>
<feature type="active site" evidence="1 3">
    <location>
        <position position="152"/>
    </location>
</feature>
<feature type="binding site" evidence="1 3">
    <location>
        <position position="109"/>
    </location>
    <ligand>
        <name>Ca(2+)</name>
        <dbReference type="ChEBI" id="CHEBI:29108"/>
    </ligand>
</feature>
<protein>
    <recommendedName>
        <fullName>Probable endonuclease C19F8.04c</fullName>
        <ecNumber>3.1.-.-</ecNumber>
    </recommendedName>
</protein>
<reference evidence="6" key="1">
    <citation type="journal article" date="2002" name="Nature">
        <title>The genome sequence of Schizosaccharomyces pombe.</title>
        <authorList>
            <person name="Wood V."/>
            <person name="Gwilliam R."/>
            <person name="Rajandream M.A."/>
            <person name="Lyne M.H."/>
            <person name="Lyne R."/>
            <person name="Stewart A."/>
            <person name="Sgouros J.G."/>
            <person name="Peat N."/>
            <person name="Hayles J."/>
            <person name="Baker S.G."/>
            <person name="Basham D."/>
            <person name="Bowman S."/>
            <person name="Brooks K."/>
            <person name="Brown D."/>
            <person name="Brown S."/>
            <person name="Chillingworth T."/>
            <person name="Churcher C.M."/>
            <person name="Collins M."/>
            <person name="Connor R."/>
            <person name="Cronin A."/>
            <person name="Davis P."/>
            <person name="Feltwell T."/>
            <person name="Fraser A."/>
            <person name="Gentles S."/>
            <person name="Goble A."/>
            <person name="Hamlin N."/>
            <person name="Harris D.E."/>
            <person name="Hidalgo J."/>
            <person name="Hodgson G."/>
            <person name="Holroyd S."/>
            <person name="Hornsby T."/>
            <person name="Howarth S."/>
            <person name="Huckle E.J."/>
            <person name="Hunt S."/>
            <person name="Jagels K."/>
            <person name="James K.D."/>
            <person name="Jones L."/>
            <person name="Jones M."/>
            <person name="Leather S."/>
            <person name="McDonald S."/>
            <person name="McLean J."/>
            <person name="Mooney P."/>
            <person name="Moule S."/>
            <person name="Mungall K.L."/>
            <person name="Murphy L.D."/>
            <person name="Niblett D."/>
            <person name="Odell C."/>
            <person name="Oliver K."/>
            <person name="O'Neil S."/>
            <person name="Pearson D."/>
            <person name="Quail M.A."/>
            <person name="Rabbinowitsch E."/>
            <person name="Rutherford K.M."/>
            <person name="Rutter S."/>
            <person name="Saunders D."/>
            <person name="Seeger K."/>
            <person name="Sharp S."/>
            <person name="Skelton J."/>
            <person name="Simmonds M.N."/>
            <person name="Squares R."/>
            <person name="Squares S."/>
            <person name="Stevens K."/>
            <person name="Taylor K."/>
            <person name="Taylor R.G."/>
            <person name="Tivey A."/>
            <person name="Walsh S.V."/>
            <person name="Warren T."/>
            <person name="Whitehead S."/>
            <person name="Woodward J.R."/>
            <person name="Volckaert G."/>
            <person name="Aert R."/>
            <person name="Robben J."/>
            <person name="Grymonprez B."/>
            <person name="Weltjens I."/>
            <person name="Vanstreels E."/>
            <person name="Rieger M."/>
            <person name="Schaefer M."/>
            <person name="Mueller-Auer S."/>
            <person name="Gabel C."/>
            <person name="Fuchs M."/>
            <person name="Duesterhoeft A."/>
            <person name="Fritzc C."/>
            <person name="Holzer E."/>
            <person name="Moestl D."/>
            <person name="Hilbert H."/>
            <person name="Borzym K."/>
            <person name="Langer I."/>
            <person name="Beck A."/>
            <person name="Lehrach H."/>
            <person name="Reinhardt R."/>
            <person name="Pohl T.M."/>
            <person name="Eger P."/>
            <person name="Zimmermann W."/>
            <person name="Wedler H."/>
            <person name="Wambutt R."/>
            <person name="Purnelle B."/>
            <person name="Goffeau A."/>
            <person name="Cadieu E."/>
            <person name="Dreano S."/>
            <person name="Gloux S."/>
            <person name="Lelaure V."/>
            <person name="Mottier S."/>
            <person name="Galibert F."/>
            <person name="Aves S.J."/>
            <person name="Xiang Z."/>
            <person name="Hunt C."/>
            <person name="Moore K."/>
            <person name="Hurst S.M."/>
            <person name="Lucas M."/>
            <person name="Rochet M."/>
            <person name="Gaillardin C."/>
            <person name="Tallada V.A."/>
            <person name="Garzon A."/>
            <person name="Thode G."/>
            <person name="Daga R.R."/>
            <person name="Cruzado L."/>
            <person name="Jimenez J."/>
            <person name="Sanchez M."/>
            <person name="del Rey F."/>
            <person name="Benito J."/>
            <person name="Dominguez A."/>
            <person name="Revuelta J.L."/>
            <person name="Moreno S."/>
            <person name="Armstrong J."/>
            <person name="Forsburg S.L."/>
            <person name="Cerutti L."/>
            <person name="Lowe T."/>
            <person name="McCombie W.R."/>
            <person name="Paulsen I."/>
            <person name="Potashkin J."/>
            <person name="Shpakovski G.V."/>
            <person name="Ussery D."/>
            <person name="Barrell B.G."/>
            <person name="Nurse P."/>
        </authorList>
    </citation>
    <scope>NUCLEOTIDE SEQUENCE [LARGE SCALE GENOMIC DNA]</scope>
    <source>
        <strain>972 / ATCC 24843</strain>
    </source>
</reference>
<reference evidence="5" key="2">
    <citation type="journal article" date="2006" name="Nat. Biotechnol.">
        <title>ORFeome cloning and global analysis of protein localization in the fission yeast Schizosaccharomyces pombe.</title>
        <authorList>
            <person name="Matsuyama A."/>
            <person name="Arai R."/>
            <person name="Yashiroda Y."/>
            <person name="Shirai A."/>
            <person name="Kamata A."/>
            <person name="Sekido S."/>
            <person name="Kobayashi Y."/>
            <person name="Hashimoto A."/>
            <person name="Hamamoto M."/>
            <person name="Hiraoka Y."/>
            <person name="Horinouchi S."/>
            <person name="Yoshida M."/>
        </authorList>
    </citation>
    <scope>SUBCELLULAR LOCATION [LARGE SCALE ANALYSIS]</scope>
</reference>
<accession>O60168</accession>
<proteinExistence type="inferred from homology"/>
<comment type="subcellular location">
    <subcellularLocation>
        <location evidence="4">Mitochondrion</location>
    </subcellularLocation>
    <subcellularLocation>
        <location evidence="2">Membrane</location>
        <topology evidence="2">Single-pass membrane protein</topology>
    </subcellularLocation>
</comment>
<comment type="similarity">
    <text evidence="5">Belongs to the LCL3 family.</text>
</comment>
<sequence length="230" mass="26393">MQESQYKEKAIIGTGLITTSIGGFFFLRRFRRISNASTIPKNYLNNSTVENRKYKTMFGYVTRVGDGDNFRFYHTPGGRLLGWHWLRKVPCSRSDLSNETISVRLAGIDAPESAHFGKQEQPYALEAKEFLHNKLYHKSVRIIPLKIDRYARLVAGVQYYPIPHFFWKKDIGPQMIRKGLAVVYEGSDGVFCPTKKECLLALEIVAKKKKLSLWSQGKKLILPSVYKRGV</sequence>
<dbReference type="EC" id="3.1.-.-"/>
<dbReference type="EMBL" id="CU329671">
    <property type="protein sequence ID" value="CAA19124.1"/>
    <property type="molecule type" value="Genomic_DNA"/>
</dbReference>
<dbReference type="PIR" id="T39827">
    <property type="entry name" value="T39827"/>
</dbReference>
<dbReference type="SMR" id="O60168"/>
<dbReference type="BioGRID" id="277083">
    <property type="interactions" value="5"/>
</dbReference>
<dbReference type="FunCoup" id="O60168">
    <property type="interactions" value="4"/>
</dbReference>
<dbReference type="STRING" id="284812.O60168"/>
<dbReference type="PaxDb" id="4896-SPBC19F8.04c.1"/>
<dbReference type="EnsemblFungi" id="SPBC19F8.04c.1">
    <property type="protein sequence ID" value="SPBC19F8.04c.1:pep"/>
    <property type="gene ID" value="SPBC19F8.04c"/>
</dbReference>
<dbReference type="KEGG" id="spo:2540556"/>
<dbReference type="PomBase" id="SPBC19F8.04c"/>
<dbReference type="VEuPathDB" id="FungiDB:SPBC19F8.04c"/>
<dbReference type="eggNOG" id="ENOG502S1U4">
    <property type="taxonomic scope" value="Eukaryota"/>
</dbReference>
<dbReference type="HOGENOM" id="CLU_046484_0_1_1"/>
<dbReference type="InParanoid" id="O60168"/>
<dbReference type="OMA" id="PWLANGD"/>
<dbReference type="PhylomeDB" id="O60168"/>
<dbReference type="PRO" id="PR:O60168"/>
<dbReference type="Proteomes" id="UP000002485">
    <property type="component" value="Chromosome II"/>
</dbReference>
<dbReference type="GO" id="GO:0016020">
    <property type="term" value="C:membrane"/>
    <property type="evidence" value="ECO:0007669"/>
    <property type="project" value="UniProtKB-SubCell"/>
</dbReference>
<dbReference type="GO" id="GO:0005739">
    <property type="term" value="C:mitochondrion"/>
    <property type="evidence" value="ECO:0007005"/>
    <property type="project" value="PomBase"/>
</dbReference>
<dbReference type="GO" id="GO:0004519">
    <property type="term" value="F:endonuclease activity"/>
    <property type="evidence" value="ECO:0007669"/>
    <property type="project" value="UniProtKB-KW"/>
</dbReference>
<dbReference type="GO" id="GO:0046872">
    <property type="term" value="F:metal ion binding"/>
    <property type="evidence" value="ECO:0007669"/>
    <property type="project" value="UniProtKB-KW"/>
</dbReference>
<dbReference type="GO" id="GO:0004518">
    <property type="term" value="F:nuclease activity"/>
    <property type="evidence" value="ECO:0000255"/>
    <property type="project" value="PomBase"/>
</dbReference>
<dbReference type="CDD" id="cd00175">
    <property type="entry name" value="SNc"/>
    <property type="match status" value="1"/>
</dbReference>
<dbReference type="Gene3D" id="2.40.50.90">
    <property type="match status" value="1"/>
</dbReference>
<dbReference type="InterPro" id="IPR035437">
    <property type="entry name" value="SNase_OB-fold_sf"/>
</dbReference>
<dbReference type="InterPro" id="IPR016071">
    <property type="entry name" value="Staphylococal_nuclease_OB-fold"/>
</dbReference>
<dbReference type="PANTHER" id="PTHR12302">
    <property type="entry name" value="EBNA2 BINDING PROTEIN P100"/>
    <property type="match status" value="1"/>
</dbReference>
<dbReference type="PANTHER" id="PTHR12302:SF3">
    <property type="entry name" value="SERINE_THREONINE-PROTEIN KINASE 31"/>
    <property type="match status" value="1"/>
</dbReference>
<dbReference type="Pfam" id="PF00565">
    <property type="entry name" value="SNase"/>
    <property type="match status" value="1"/>
</dbReference>
<dbReference type="SMART" id="SM00318">
    <property type="entry name" value="SNc"/>
    <property type="match status" value="1"/>
</dbReference>
<dbReference type="SUPFAM" id="SSF50199">
    <property type="entry name" value="Staphylococcal nuclease"/>
    <property type="match status" value="1"/>
</dbReference>
<dbReference type="PROSITE" id="PS50830">
    <property type="entry name" value="TNASE_3"/>
    <property type="match status" value="1"/>
</dbReference>
<name>LCL3_SCHPO</name>
<keyword id="KW-0106">Calcium</keyword>
<keyword id="KW-0255">Endonuclease</keyword>
<keyword id="KW-0378">Hydrolase</keyword>
<keyword id="KW-0472">Membrane</keyword>
<keyword id="KW-0479">Metal-binding</keyword>
<keyword id="KW-0496">Mitochondrion</keyword>
<keyword id="KW-0540">Nuclease</keyword>
<keyword id="KW-1185">Reference proteome</keyword>
<keyword id="KW-0812">Transmembrane</keyword>
<keyword id="KW-1133">Transmembrane helix</keyword>
<gene>
    <name type="ORF">SPBC19F8.04c</name>
</gene>
<organism>
    <name type="scientific">Schizosaccharomyces pombe (strain 972 / ATCC 24843)</name>
    <name type="common">Fission yeast</name>
    <dbReference type="NCBI Taxonomy" id="284812"/>
    <lineage>
        <taxon>Eukaryota</taxon>
        <taxon>Fungi</taxon>
        <taxon>Dikarya</taxon>
        <taxon>Ascomycota</taxon>
        <taxon>Taphrinomycotina</taxon>
        <taxon>Schizosaccharomycetes</taxon>
        <taxon>Schizosaccharomycetales</taxon>
        <taxon>Schizosaccharomycetaceae</taxon>
        <taxon>Schizosaccharomyces</taxon>
    </lineage>
</organism>
<evidence type="ECO:0000250" key="1">
    <source>
        <dbReference type="UniProtKB" id="P00644"/>
    </source>
</evidence>
<evidence type="ECO:0000255" key="2"/>
<evidence type="ECO:0000255" key="3">
    <source>
        <dbReference type="PROSITE-ProRule" id="PRU00272"/>
    </source>
</evidence>
<evidence type="ECO:0000269" key="4">
    <source>
    </source>
</evidence>
<evidence type="ECO:0000305" key="5"/>
<evidence type="ECO:0000312" key="6">
    <source>
        <dbReference type="EMBL" id="CAA19124.1"/>
    </source>
</evidence>